<reference key="1">
    <citation type="journal article" date="2002" name="Nature">
        <title>Sequence and analysis of chromosome 2 of Dictyostelium discoideum.</title>
        <authorList>
            <person name="Gloeckner G."/>
            <person name="Eichinger L."/>
            <person name="Szafranski K."/>
            <person name="Pachebat J.A."/>
            <person name="Bankier A.T."/>
            <person name="Dear P.H."/>
            <person name="Lehmann R."/>
            <person name="Baumgart C."/>
            <person name="Parra G."/>
            <person name="Abril J.F."/>
            <person name="Guigo R."/>
            <person name="Kumpf K."/>
            <person name="Tunggal B."/>
            <person name="Cox E.C."/>
            <person name="Quail M.A."/>
            <person name="Platzer M."/>
            <person name="Rosenthal A."/>
            <person name="Noegel A.A."/>
        </authorList>
    </citation>
    <scope>NUCLEOTIDE SEQUENCE [LARGE SCALE GENOMIC DNA]</scope>
    <source>
        <strain>AX4</strain>
    </source>
</reference>
<reference key="2">
    <citation type="journal article" date="2005" name="Nature">
        <title>The genome of the social amoeba Dictyostelium discoideum.</title>
        <authorList>
            <person name="Eichinger L."/>
            <person name="Pachebat J.A."/>
            <person name="Gloeckner G."/>
            <person name="Rajandream M.A."/>
            <person name="Sucgang R."/>
            <person name="Berriman M."/>
            <person name="Song J."/>
            <person name="Olsen R."/>
            <person name="Szafranski K."/>
            <person name="Xu Q."/>
            <person name="Tunggal B."/>
            <person name="Kummerfeld S."/>
            <person name="Madera M."/>
            <person name="Konfortov B.A."/>
            <person name="Rivero F."/>
            <person name="Bankier A.T."/>
            <person name="Lehmann R."/>
            <person name="Hamlin N."/>
            <person name="Davies R."/>
            <person name="Gaudet P."/>
            <person name="Fey P."/>
            <person name="Pilcher K."/>
            <person name="Chen G."/>
            <person name="Saunders D."/>
            <person name="Sodergren E.J."/>
            <person name="Davis P."/>
            <person name="Kerhornou A."/>
            <person name="Nie X."/>
            <person name="Hall N."/>
            <person name="Anjard C."/>
            <person name="Hemphill L."/>
            <person name="Bason N."/>
            <person name="Farbrother P."/>
            <person name="Desany B."/>
            <person name="Just E."/>
            <person name="Morio T."/>
            <person name="Rost R."/>
            <person name="Churcher C.M."/>
            <person name="Cooper J."/>
            <person name="Haydock S."/>
            <person name="van Driessche N."/>
            <person name="Cronin A."/>
            <person name="Goodhead I."/>
            <person name="Muzny D.M."/>
            <person name="Mourier T."/>
            <person name="Pain A."/>
            <person name="Lu M."/>
            <person name="Harper D."/>
            <person name="Lindsay R."/>
            <person name="Hauser H."/>
            <person name="James K.D."/>
            <person name="Quiles M."/>
            <person name="Madan Babu M."/>
            <person name="Saito T."/>
            <person name="Buchrieser C."/>
            <person name="Wardroper A."/>
            <person name="Felder M."/>
            <person name="Thangavelu M."/>
            <person name="Johnson D."/>
            <person name="Knights A."/>
            <person name="Loulseged H."/>
            <person name="Mungall K.L."/>
            <person name="Oliver K."/>
            <person name="Price C."/>
            <person name="Quail M.A."/>
            <person name="Urushihara H."/>
            <person name="Hernandez J."/>
            <person name="Rabbinowitsch E."/>
            <person name="Steffen D."/>
            <person name="Sanders M."/>
            <person name="Ma J."/>
            <person name="Kohara Y."/>
            <person name="Sharp S."/>
            <person name="Simmonds M.N."/>
            <person name="Spiegler S."/>
            <person name="Tivey A."/>
            <person name="Sugano S."/>
            <person name="White B."/>
            <person name="Walker D."/>
            <person name="Woodward J.R."/>
            <person name="Winckler T."/>
            <person name="Tanaka Y."/>
            <person name="Shaulsky G."/>
            <person name="Schleicher M."/>
            <person name="Weinstock G.M."/>
            <person name="Rosenthal A."/>
            <person name="Cox E.C."/>
            <person name="Chisholm R.L."/>
            <person name="Gibbs R.A."/>
            <person name="Loomis W.F."/>
            <person name="Platzer M."/>
            <person name="Kay R.R."/>
            <person name="Williams J.G."/>
            <person name="Dear P.H."/>
            <person name="Noegel A.A."/>
            <person name="Barrell B.G."/>
            <person name="Kuspa A."/>
        </authorList>
    </citation>
    <scope>NUCLEOTIDE SEQUENCE [LARGE SCALE GENOMIC DNA]</scope>
    <source>
        <strain>AX4</strain>
    </source>
</reference>
<comment type="catalytic activity">
    <reaction>
        <text>L-seryl-[protein] + ATP = O-phospho-L-seryl-[protein] + ADP + H(+)</text>
        <dbReference type="Rhea" id="RHEA:17989"/>
        <dbReference type="Rhea" id="RHEA-COMP:9863"/>
        <dbReference type="Rhea" id="RHEA-COMP:11604"/>
        <dbReference type="ChEBI" id="CHEBI:15378"/>
        <dbReference type="ChEBI" id="CHEBI:29999"/>
        <dbReference type="ChEBI" id="CHEBI:30616"/>
        <dbReference type="ChEBI" id="CHEBI:83421"/>
        <dbReference type="ChEBI" id="CHEBI:456216"/>
        <dbReference type="EC" id="2.7.11.1"/>
    </reaction>
</comment>
<comment type="catalytic activity">
    <reaction>
        <text>L-threonyl-[protein] + ATP = O-phospho-L-threonyl-[protein] + ADP + H(+)</text>
        <dbReference type="Rhea" id="RHEA:46608"/>
        <dbReference type="Rhea" id="RHEA-COMP:11060"/>
        <dbReference type="Rhea" id="RHEA-COMP:11605"/>
        <dbReference type="ChEBI" id="CHEBI:15378"/>
        <dbReference type="ChEBI" id="CHEBI:30013"/>
        <dbReference type="ChEBI" id="CHEBI:30616"/>
        <dbReference type="ChEBI" id="CHEBI:61977"/>
        <dbReference type="ChEBI" id="CHEBI:456216"/>
        <dbReference type="EC" id="2.7.11.1"/>
    </reaction>
</comment>
<comment type="similarity">
    <text evidence="1">Belongs to the protein kinase superfamily. Ser/Thr protein kinase family.</text>
</comment>
<keyword id="KW-0067">ATP-binding</keyword>
<keyword id="KW-0418">Kinase</keyword>
<keyword id="KW-0547">Nucleotide-binding</keyword>
<keyword id="KW-1185">Reference proteome</keyword>
<keyword id="KW-0723">Serine/threonine-protein kinase</keyword>
<keyword id="KW-0808">Transferase</keyword>
<gene>
    <name type="ORF">DDB_G0276461</name>
</gene>
<organism>
    <name type="scientific">Dictyostelium discoideum</name>
    <name type="common">Social amoeba</name>
    <dbReference type="NCBI Taxonomy" id="44689"/>
    <lineage>
        <taxon>Eukaryota</taxon>
        <taxon>Amoebozoa</taxon>
        <taxon>Evosea</taxon>
        <taxon>Eumycetozoa</taxon>
        <taxon>Dictyostelia</taxon>
        <taxon>Dictyosteliales</taxon>
        <taxon>Dictyosteliaceae</taxon>
        <taxon>Dictyostelium</taxon>
    </lineage>
</organism>
<evidence type="ECO:0000255" key="1">
    <source>
        <dbReference type="PROSITE-ProRule" id="PRU00159"/>
    </source>
</evidence>
<evidence type="ECO:0000255" key="2">
    <source>
        <dbReference type="PROSITE-ProRule" id="PRU10027"/>
    </source>
</evidence>
<evidence type="ECO:0000256" key="3">
    <source>
        <dbReference type="SAM" id="MobiDB-lite"/>
    </source>
</evidence>
<proteinExistence type="inferred from homology"/>
<feature type="chain" id="PRO_0000362059" description="Probable serine/threonine-protein kinase DDB_G0276461">
    <location>
        <begin position="1"/>
        <end position="798"/>
    </location>
</feature>
<feature type="domain" description="Protein kinase" evidence="1">
    <location>
        <begin position="54"/>
        <end position="324"/>
    </location>
</feature>
<feature type="region of interest" description="Disordered" evidence="3">
    <location>
        <begin position="330"/>
        <end position="538"/>
    </location>
</feature>
<feature type="region of interest" description="Disordered" evidence="3">
    <location>
        <begin position="553"/>
        <end position="645"/>
    </location>
</feature>
<feature type="region of interest" description="Disordered" evidence="3">
    <location>
        <begin position="659"/>
        <end position="798"/>
    </location>
</feature>
<feature type="compositionally biased region" description="Low complexity" evidence="3">
    <location>
        <begin position="335"/>
        <end position="406"/>
    </location>
</feature>
<feature type="compositionally biased region" description="Low complexity" evidence="3">
    <location>
        <begin position="429"/>
        <end position="490"/>
    </location>
</feature>
<feature type="compositionally biased region" description="Low complexity" evidence="3">
    <location>
        <begin position="506"/>
        <end position="538"/>
    </location>
</feature>
<feature type="compositionally biased region" description="Low complexity" evidence="3">
    <location>
        <begin position="557"/>
        <end position="603"/>
    </location>
</feature>
<feature type="compositionally biased region" description="Low complexity" evidence="3">
    <location>
        <begin position="611"/>
        <end position="642"/>
    </location>
</feature>
<feature type="compositionally biased region" description="Low complexity" evidence="3">
    <location>
        <begin position="659"/>
        <end position="678"/>
    </location>
</feature>
<feature type="compositionally biased region" description="Polar residues" evidence="3">
    <location>
        <begin position="679"/>
        <end position="697"/>
    </location>
</feature>
<feature type="compositionally biased region" description="Low complexity" evidence="3">
    <location>
        <begin position="698"/>
        <end position="716"/>
    </location>
</feature>
<feature type="compositionally biased region" description="Polar residues" evidence="3">
    <location>
        <begin position="717"/>
        <end position="769"/>
    </location>
</feature>
<feature type="compositionally biased region" description="Low complexity" evidence="3">
    <location>
        <begin position="770"/>
        <end position="790"/>
    </location>
</feature>
<feature type="active site" description="Proton acceptor" evidence="1 2">
    <location>
        <position position="185"/>
    </location>
</feature>
<feature type="binding site" evidence="1">
    <location>
        <begin position="60"/>
        <end position="68"/>
    </location>
    <ligand>
        <name>ATP</name>
        <dbReference type="ChEBI" id="CHEBI:30616"/>
    </ligand>
</feature>
<feature type="binding site" evidence="1">
    <location>
        <position position="82"/>
    </location>
    <ligand>
        <name>ATP</name>
        <dbReference type="ChEBI" id="CHEBI:30616"/>
    </ligand>
</feature>
<protein>
    <recommendedName>
        <fullName>Probable serine/threonine-protein kinase DDB_G0276461</fullName>
        <ecNumber>2.7.11.1</ecNumber>
    </recommendedName>
</protein>
<dbReference type="EC" id="2.7.11.1"/>
<dbReference type="EMBL" id="AAFI02000015">
    <property type="protein sequence ID" value="EAL69184.1"/>
    <property type="molecule type" value="Genomic_DNA"/>
</dbReference>
<dbReference type="RefSeq" id="XP_643126.1">
    <property type="nucleotide sequence ID" value="XM_638034.1"/>
</dbReference>
<dbReference type="SMR" id="Q86HW6"/>
<dbReference type="FunCoup" id="Q86HW6">
    <property type="interactions" value="663"/>
</dbReference>
<dbReference type="STRING" id="44689.Q86HW6"/>
<dbReference type="PaxDb" id="44689-DDB0229347"/>
<dbReference type="EnsemblProtists" id="EAL69184">
    <property type="protein sequence ID" value="EAL69184"/>
    <property type="gene ID" value="DDB_G0276461"/>
</dbReference>
<dbReference type="GeneID" id="8620531"/>
<dbReference type="KEGG" id="ddi:DDB_G0276461"/>
<dbReference type="dictyBase" id="DDB_G0276461"/>
<dbReference type="VEuPathDB" id="AmoebaDB:DDB_G0276461"/>
<dbReference type="eggNOG" id="KOG1989">
    <property type="taxonomic scope" value="Eukaryota"/>
</dbReference>
<dbReference type="HOGENOM" id="CLU_352497_0_0_1"/>
<dbReference type="InParanoid" id="Q86HW6"/>
<dbReference type="OMA" id="LFKMAFY"/>
<dbReference type="PRO" id="PR:Q86HW6"/>
<dbReference type="Proteomes" id="UP000002195">
    <property type="component" value="Chromosome 2"/>
</dbReference>
<dbReference type="GO" id="GO:0005737">
    <property type="term" value="C:cytoplasm"/>
    <property type="evidence" value="ECO:0000318"/>
    <property type="project" value="GO_Central"/>
</dbReference>
<dbReference type="GO" id="GO:0005524">
    <property type="term" value="F:ATP binding"/>
    <property type="evidence" value="ECO:0007669"/>
    <property type="project" value="UniProtKB-KW"/>
</dbReference>
<dbReference type="GO" id="GO:0106310">
    <property type="term" value="F:protein serine kinase activity"/>
    <property type="evidence" value="ECO:0007669"/>
    <property type="project" value="RHEA"/>
</dbReference>
<dbReference type="GO" id="GO:0004674">
    <property type="term" value="F:protein serine/threonine kinase activity"/>
    <property type="evidence" value="ECO:0000318"/>
    <property type="project" value="GO_Central"/>
</dbReference>
<dbReference type="Gene3D" id="1.10.510.10">
    <property type="entry name" value="Transferase(Phosphotransferase) domain 1"/>
    <property type="match status" value="1"/>
</dbReference>
<dbReference type="InterPro" id="IPR011009">
    <property type="entry name" value="Kinase-like_dom_sf"/>
</dbReference>
<dbReference type="InterPro" id="IPR000719">
    <property type="entry name" value="Prot_kinase_dom"/>
</dbReference>
<dbReference type="InterPro" id="IPR008271">
    <property type="entry name" value="Ser/Thr_kinase_AS"/>
</dbReference>
<dbReference type="PANTHER" id="PTHR22967:SF57">
    <property type="entry name" value="AUXILIN, ISOFORM A-RELATED"/>
    <property type="match status" value="1"/>
</dbReference>
<dbReference type="PANTHER" id="PTHR22967">
    <property type="entry name" value="SERINE/THREONINE PROTEIN KINASE"/>
    <property type="match status" value="1"/>
</dbReference>
<dbReference type="Pfam" id="PF00069">
    <property type="entry name" value="Pkinase"/>
    <property type="match status" value="1"/>
</dbReference>
<dbReference type="SMART" id="SM00220">
    <property type="entry name" value="S_TKc"/>
    <property type="match status" value="1"/>
</dbReference>
<dbReference type="SUPFAM" id="SSF56112">
    <property type="entry name" value="Protein kinase-like (PK-like)"/>
    <property type="match status" value="1"/>
</dbReference>
<dbReference type="PROSITE" id="PS50011">
    <property type="entry name" value="PROTEIN_KINASE_DOM"/>
    <property type="match status" value="1"/>
</dbReference>
<dbReference type="PROSITE" id="PS00108">
    <property type="entry name" value="PROTEIN_KINASE_ST"/>
    <property type="match status" value="1"/>
</dbReference>
<sequence>MNRFLEFSNNFLEVAGNTINNISSKSITDNVGNVWGNITGGRVGQVYDINGRRVTEVKLVAEGGFGFVYLVRDDYNNMYALKRMFIQERERLEAMKNEIDVMQKLRNNPNIVKLEGFKINENRNTRETEVLMLMEYCSGGSVLDIMNARGEFTRLEEREILAIFSDVCNGVLAMHQQQPPIAHRDLKIENVLYCEHSNRYKLCDFGSSTIKTFNTATERGKAEDDINMFTTLFYRAPEMVDLYRGQIIDEKVDVWALGCLLFKMAFYVDPFDGGSLQIINNNYKIPDNSKYSNNFHKLIQFILVADPTQRPSINDLLNYLNEIRGSSRRGLQTFSSNNNNSNNNSNNNSNNNSNNNSVNNSSNSINRPIRTSSSSNSTPNFNSPNTNNNNYNNNNNNSKNYGNTPNSTPPNAKKNIFDILGDDTTSSTSNSNNSPSVSRNNINNNSNNFNNNNNNNNNNNNNNNNNNNNNNNNNTNNNNSNNNNYNNNNNKFDEFESWGNTPLQHPSPSNSNSNVIINNTNSSGKNNQNKSNSGNGNFFDNDFEFEGFVSPTTNGSTNFEVNTTNTNVSLNSSTHSSSSFNNSSNNNNTNNSSVSVGSSINNSGTRLMNNSSGSLPQSRQSSFNSTPQQQQQQFNSSTNSGSYNNLTSSFNNLNISTSSSASISSSGGVSNNSDNSWNVTLTPSQSNKNSTGNLKPLNNNNNNNNNNNNRFANNTNSSRDYSFDFSSPNTSNNNDFGSFVQPSSSSSLNTTHFSKPNYNVNLNQTTSMTNNYNNNNYNNNNNSNNNNNNSKVFDFGIL</sequence>
<accession>Q86HW6</accession>
<accession>Q551K8</accession>
<name>Y6461_DICDI</name>